<protein>
    <recommendedName>
        <fullName>Glutathione hydrolase 1</fullName>
        <ecNumber>3.4.19.13</ecNumber>
    </recommendedName>
    <alternativeName>
        <fullName>Gamma-glutamyltransferase 1</fullName>
    </alternativeName>
    <alternativeName>
        <fullName>Gamma-glutamyltranspeptidase 1</fullName>
        <ecNumber>2.3.2.2</ecNumber>
    </alternativeName>
</protein>
<feature type="signal peptide" evidence="2">
    <location>
        <begin position="1"/>
        <end position="22"/>
    </location>
</feature>
<feature type="chain" id="PRO_0000420911" description="Glutathione hydrolase 1">
    <location>
        <begin position="23"/>
        <end position="572"/>
    </location>
</feature>
<feature type="region of interest" description="Disordered" evidence="3">
    <location>
        <begin position="552"/>
        <end position="572"/>
    </location>
</feature>
<feature type="active site" description="Nucleophile" evidence="1">
    <location>
        <position position="368"/>
    </location>
</feature>
<feature type="binding site" evidence="1">
    <location>
        <position position="99"/>
    </location>
    <ligand>
        <name>L-glutamate</name>
        <dbReference type="ChEBI" id="CHEBI:29985"/>
    </ligand>
</feature>
<feature type="binding site" evidence="1">
    <location>
        <position position="386"/>
    </location>
    <ligand>
        <name>L-glutamate</name>
        <dbReference type="ChEBI" id="CHEBI:29985"/>
    </ligand>
</feature>
<feature type="binding site" evidence="1">
    <location>
        <position position="388"/>
    </location>
    <ligand>
        <name>L-glutamate</name>
        <dbReference type="ChEBI" id="CHEBI:29985"/>
    </ligand>
</feature>
<feature type="binding site" evidence="1">
    <location>
        <position position="407"/>
    </location>
    <ligand>
        <name>L-glutamate</name>
        <dbReference type="ChEBI" id="CHEBI:29985"/>
    </ligand>
</feature>
<feature type="binding site" evidence="1">
    <location>
        <position position="410"/>
    </location>
    <ligand>
        <name>L-glutamate</name>
        <dbReference type="ChEBI" id="CHEBI:29985"/>
    </ligand>
</feature>
<feature type="binding site" evidence="1">
    <location>
        <begin position="440"/>
        <end position="441"/>
    </location>
    <ligand>
        <name>L-glutamate</name>
        <dbReference type="ChEBI" id="CHEBI:29985"/>
    </ligand>
</feature>
<feature type="binding site" evidence="1">
    <location>
        <begin position="461"/>
        <end position="462"/>
    </location>
    <ligand>
        <name>L-glutamate</name>
        <dbReference type="ChEBI" id="CHEBI:29985"/>
    </ligand>
</feature>
<feature type="glycosylation site" description="N-linked (GlcNAc...) asparagine" evidence="2">
    <location>
        <position position="171"/>
    </location>
</feature>
<feature type="glycosylation site" description="N-linked (GlcNAc...) asparagine" evidence="2">
    <location>
        <position position="222"/>
    </location>
</feature>
<feature type="glycosylation site" description="N-linked (GlcNAc...) asparagine" evidence="2">
    <location>
        <position position="505"/>
    </location>
</feature>
<feature type="sequence conflict" description="In Ref. 4; BAH20434." evidence="7" ref="4">
    <original>V</original>
    <variation>A</variation>
    <location>
        <position position="70"/>
    </location>
</feature>
<organism>
    <name type="scientific">Arabidopsis thaliana</name>
    <name type="common">Mouse-ear cress</name>
    <dbReference type="NCBI Taxonomy" id="3702"/>
    <lineage>
        <taxon>Eukaryota</taxon>
        <taxon>Viridiplantae</taxon>
        <taxon>Streptophyta</taxon>
        <taxon>Embryophyta</taxon>
        <taxon>Tracheophyta</taxon>
        <taxon>Spermatophyta</taxon>
        <taxon>Magnoliopsida</taxon>
        <taxon>eudicotyledons</taxon>
        <taxon>Gunneridae</taxon>
        <taxon>Pentapetalae</taxon>
        <taxon>rosids</taxon>
        <taxon>malvids</taxon>
        <taxon>Brassicales</taxon>
        <taxon>Brassicaceae</taxon>
        <taxon>Camelineae</taxon>
        <taxon>Arabidopsis</taxon>
    </lineage>
</organism>
<name>GAGT1_ARATH</name>
<dbReference type="EC" id="3.4.19.13"/>
<dbReference type="EC" id="2.3.2.2"/>
<dbReference type="EMBL" id="AL022605">
    <property type="protein sequence ID" value="CAA18750.1"/>
    <property type="status" value="ALT_SEQ"/>
    <property type="molecule type" value="Genomic_DNA"/>
</dbReference>
<dbReference type="EMBL" id="AL161595">
    <property type="protein sequence ID" value="CAB80627.1"/>
    <property type="status" value="ALT_SEQ"/>
    <property type="molecule type" value="Genomic_DNA"/>
</dbReference>
<dbReference type="EMBL" id="CP002687">
    <property type="protein sequence ID" value="AEE87097.1"/>
    <property type="molecule type" value="Genomic_DNA"/>
</dbReference>
<dbReference type="EMBL" id="CP002687">
    <property type="protein sequence ID" value="AEE87098.1"/>
    <property type="molecule type" value="Genomic_DNA"/>
</dbReference>
<dbReference type="EMBL" id="AY069872">
    <property type="protein sequence ID" value="AAL47428.1"/>
    <property type="molecule type" value="mRNA"/>
</dbReference>
<dbReference type="EMBL" id="BT000495">
    <property type="protein sequence ID" value="AAN18064.1"/>
    <property type="molecule type" value="mRNA"/>
</dbReference>
<dbReference type="EMBL" id="AK317779">
    <property type="protein sequence ID" value="BAH20434.1"/>
    <property type="molecule type" value="mRNA"/>
</dbReference>
<dbReference type="PIR" id="T05001">
    <property type="entry name" value="T05001"/>
</dbReference>
<dbReference type="RefSeq" id="NP_195674.2">
    <property type="nucleotide sequence ID" value="NM_120124.6"/>
</dbReference>
<dbReference type="RefSeq" id="NP_974717.1">
    <property type="nucleotide sequence ID" value="NM_202988.4"/>
</dbReference>
<dbReference type="SMR" id="Q8VYW6"/>
<dbReference type="FunCoup" id="Q8VYW6">
    <property type="interactions" value="831"/>
</dbReference>
<dbReference type="STRING" id="3702.Q8VYW6"/>
<dbReference type="MEROPS" id="T03.008"/>
<dbReference type="GlyCosmos" id="Q8VYW6">
    <property type="glycosylation" value="3 sites, No reported glycans"/>
</dbReference>
<dbReference type="GlyGen" id="Q8VYW6">
    <property type="glycosylation" value="3 sites"/>
</dbReference>
<dbReference type="iPTMnet" id="Q8VYW6"/>
<dbReference type="MetOSite" id="Q8VYW6"/>
<dbReference type="PaxDb" id="3702-AT4G39640.1"/>
<dbReference type="ProteomicsDB" id="230473"/>
<dbReference type="EnsemblPlants" id="AT4G39640.1">
    <property type="protein sequence ID" value="AT4G39640.1"/>
    <property type="gene ID" value="AT4G39640"/>
</dbReference>
<dbReference type="EnsemblPlants" id="AT4G39640.2">
    <property type="protein sequence ID" value="AT4G39640.2"/>
    <property type="gene ID" value="AT4G39640"/>
</dbReference>
<dbReference type="GeneID" id="830118"/>
<dbReference type="Gramene" id="AT4G39640.1">
    <property type="protein sequence ID" value="AT4G39640.1"/>
    <property type="gene ID" value="AT4G39640"/>
</dbReference>
<dbReference type="Gramene" id="AT4G39640.2">
    <property type="protein sequence ID" value="AT4G39640.2"/>
    <property type="gene ID" value="AT4G39640"/>
</dbReference>
<dbReference type="KEGG" id="ath:AT4G39640"/>
<dbReference type="Araport" id="AT4G39640"/>
<dbReference type="TAIR" id="AT4G39640">
    <property type="gene designation" value="GGT1"/>
</dbReference>
<dbReference type="eggNOG" id="KOG2410">
    <property type="taxonomic scope" value="Eukaryota"/>
</dbReference>
<dbReference type="HOGENOM" id="CLU_014813_4_3_1"/>
<dbReference type="InParanoid" id="Q8VYW6"/>
<dbReference type="OMA" id="GFMLVHL"/>
<dbReference type="PhylomeDB" id="Q8VYW6"/>
<dbReference type="BioCyc" id="ARA:AT4G39640-MONOMER"/>
<dbReference type="BRENDA" id="2.3.2.2">
    <property type="organism ID" value="399"/>
</dbReference>
<dbReference type="UniPathway" id="UPA00204"/>
<dbReference type="CD-CODE" id="4299E36E">
    <property type="entry name" value="Nucleolus"/>
</dbReference>
<dbReference type="PRO" id="PR:Q8VYW6"/>
<dbReference type="Proteomes" id="UP000006548">
    <property type="component" value="Chromosome 4"/>
</dbReference>
<dbReference type="ExpressionAtlas" id="Q8VYW6">
    <property type="expression patterns" value="baseline and differential"/>
</dbReference>
<dbReference type="GO" id="GO:0048046">
    <property type="term" value="C:apoplast"/>
    <property type="evidence" value="ECO:0000314"/>
    <property type="project" value="TAIR"/>
</dbReference>
<dbReference type="GO" id="GO:0009506">
    <property type="term" value="C:plasmodesma"/>
    <property type="evidence" value="ECO:0007005"/>
    <property type="project" value="TAIR"/>
</dbReference>
<dbReference type="GO" id="GO:0016756">
    <property type="term" value="F:glutathione gamma-glutamylcysteinyltransferase activity"/>
    <property type="evidence" value="ECO:0000314"/>
    <property type="project" value="TAIR"/>
</dbReference>
<dbReference type="GO" id="GO:0036374">
    <property type="term" value="F:glutathione hydrolase activity"/>
    <property type="evidence" value="ECO:0007669"/>
    <property type="project" value="UniProtKB-EC"/>
</dbReference>
<dbReference type="GO" id="GO:0103068">
    <property type="term" value="F:leukotriene C4 gamma-glutamyl transferase activity"/>
    <property type="evidence" value="ECO:0007669"/>
    <property type="project" value="UniProtKB-EC"/>
</dbReference>
<dbReference type="GO" id="GO:0006751">
    <property type="term" value="P:glutathione catabolic process"/>
    <property type="evidence" value="ECO:0000314"/>
    <property type="project" value="TAIR"/>
</dbReference>
<dbReference type="GO" id="GO:0006979">
    <property type="term" value="P:response to oxidative stress"/>
    <property type="evidence" value="ECO:0000314"/>
    <property type="project" value="TAIR"/>
</dbReference>
<dbReference type="FunFam" id="1.10.246.130:FF:000001">
    <property type="entry name" value="Gamma-glutamyltransferase 5 isoform 1"/>
    <property type="match status" value="1"/>
</dbReference>
<dbReference type="FunFam" id="3.60.20.40:FF:000004">
    <property type="entry name" value="Glutathione hydrolase 1"/>
    <property type="match status" value="1"/>
</dbReference>
<dbReference type="Gene3D" id="1.10.246.130">
    <property type="match status" value="1"/>
</dbReference>
<dbReference type="Gene3D" id="3.60.20.40">
    <property type="match status" value="1"/>
</dbReference>
<dbReference type="InterPro" id="IPR043138">
    <property type="entry name" value="GGT_lsub_C"/>
</dbReference>
<dbReference type="InterPro" id="IPR000101">
    <property type="entry name" value="GGT_peptidase"/>
</dbReference>
<dbReference type="InterPro" id="IPR043137">
    <property type="entry name" value="GGT_ssub"/>
</dbReference>
<dbReference type="InterPro" id="IPR029055">
    <property type="entry name" value="Ntn_hydrolases_N"/>
</dbReference>
<dbReference type="NCBIfam" id="TIGR00066">
    <property type="entry name" value="g_glut_trans"/>
    <property type="match status" value="1"/>
</dbReference>
<dbReference type="PANTHER" id="PTHR11686">
    <property type="entry name" value="GAMMA GLUTAMYL TRANSPEPTIDASE"/>
    <property type="match status" value="1"/>
</dbReference>
<dbReference type="PANTHER" id="PTHR11686:SF34">
    <property type="entry name" value="GLUTATHIONE HYDROLASE 1-RELATED"/>
    <property type="match status" value="1"/>
</dbReference>
<dbReference type="Pfam" id="PF01019">
    <property type="entry name" value="G_glu_transpept"/>
    <property type="match status" value="1"/>
</dbReference>
<dbReference type="PRINTS" id="PR01210">
    <property type="entry name" value="GGTRANSPTASE"/>
</dbReference>
<dbReference type="SUPFAM" id="SSF56235">
    <property type="entry name" value="N-terminal nucleophile aminohydrolases (Ntn hydrolases)"/>
    <property type="match status" value="1"/>
</dbReference>
<gene>
    <name type="primary">GGT1</name>
    <name type="ordered locus">At4g39640</name>
    <name type="ORF">T19P19.30</name>
</gene>
<proteinExistence type="evidence at transcript level"/>
<accession>Q8VYW6</accession>
<accession>B9DI67</accession>
<accession>O65652</accession>
<evidence type="ECO:0000250" key="1"/>
<evidence type="ECO:0000255" key="2"/>
<evidence type="ECO:0000256" key="3">
    <source>
        <dbReference type="SAM" id="MobiDB-lite"/>
    </source>
</evidence>
<evidence type="ECO:0000269" key="4">
    <source>
    </source>
</evidence>
<evidence type="ECO:0000269" key="5">
    <source>
    </source>
</evidence>
<evidence type="ECO:0000269" key="6">
    <source>
    </source>
</evidence>
<evidence type="ECO:0000305" key="7"/>
<sequence>MSLVRTVTIVLFIIAFLQNAAAQKRQQSIVKSRGAVATDDGRCSVIGMRVLREGGNAIDASVAAALCLGVVSPASSGIGGGAFTVVKIAGGKEIAYDSRETAPLRATENMYGGNVDLKKKGALSVGVPGEVAGLFTAWKQHGKLPWKRLVTPAEKLAEGFKISKYLYMQMNATRSDILADKGLSDLFVSNGELKKPGTICHNPKLALTLKLIGEYGPKAFYNGTVGVNLARDIKKSGGIITLKDLQSYRVKIKEPLSADILGYRVLGMPPPSSGGAAMMLVLNILSQYGIPSGVSGPLGVHRLIEALKHAFAVRMNLGDPDFTDVTKVVSDMLSPKFAKDLKSKINDQKTFDPKYYGGMWNQIDDHGTSHLSIIDRERNAVSMTSTINGYFGALMLSPSTGIVLNNEMDDFSIPMKSNGNLDVPPPAPANFIRPGKRPLSSMSPTIVLKDGKVKAAVGASGGANIIAGTTEVYLNHFFLKMDPLSSVLAPRIYHQLIPNRASYENWTTVFNDHFEIPKATRVVLEKKGHVLSPIAGGTIAQFIVQESGENSGGRSELVAVSDPRKGGFPSGY</sequence>
<keyword id="KW-0012">Acyltransferase</keyword>
<keyword id="KW-0052">Apoplast</keyword>
<keyword id="KW-0325">Glycoprotein</keyword>
<keyword id="KW-0378">Hydrolase</keyword>
<keyword id="KW-1185">Reference proteome</keyword>
<keyword id="KW-0964">Secreted</keyword>
<keyword id="KW-0732">Signal</keyword>
<keyword id="KW-0808">Transferase</keyword>
<reference key="1">
    <citation type="journal article" date="1999" name="Nature">
        <title>Sequence and analysis of chromosome 4 of the plant Arabidopsis thaliana.</title>
        <authorList>
            <person name="Mayer K.F.X."/>
            <person name="Schueller C."/>
            <person name="Wambutt R."/>
            <person name="Murphy G."/>
            <person name="Volckaert G."/>
            <person name="Pohl T."/>
            <person name="Duesterhoeft A."/>
            <person name="Stiekema W."/>
            <person name="Entian K.-D."/>
            <person name="Terryn N."/>
            <person name="Harris B."/>
            <person name="Ansorge W."/>
            <person name="Brandt P."/>
            <person name="Grivell L.A."/>
            <person name="Rieger M."/>
            <person name="Weichselgartner M."/>
            <person name="de Simone V."/>
            <person name="Obermaier B."/>
            <person name="Mache R."/>
            <person name="Mueller M."/>
            <person name="Kreis M."/>
            <person name="Delseny M."/>
            <person name="Puigdomenech P."/>
            <person name="Watson M."/>
            <person name="Schmidtheini T."/>
            <person name="Reichert B."/>
            <person name="Portetelle D."/>
            <person name="Perez-Alonso M."/>
            <person name="Boutry M."/>
            <person name="Bancroft I."/>
            <person name="Vos P."/>
            <person name="Hoheisel J."/>
            <person name="Zimmermann W."/>
            <person name="Wedler H."/>
            <person name="Ridley P."/>
            <person name="Langham S.-A."/>
            <person name="McCullagh B."/>
            <person name="Bilham L."/>
            <person name="Robben J."/>
            <person name="van der Schueren J."/>
            <person name="Grymonprez B."/>
            <person name="Chuang Y.-J."/>
            <person name="Vandenbussche F."/>
            <person name="Braeken M."/>
            <person name="Weltjens I."/>
            <person name="Voet M."/>
            <person name="Bastiaens I."/>
            <person name="Aert R."/>
            <person name="Defoor E."/>
            <person name="Weitzenegger T."/>
            <person name="Bothe G."/>
            <person name="Ramsperger U."/>
            <person name="Hilbert H."/>
            <person name="Braun M."/>
            <person name="Holzer E."/>
            <person name="Brandt A."/>
            <person name="Peters S."/>
            <person name="van Staveren M."/>
            <person name="Dirkse W."/>
            <person name="Mooijman P."/>
            <person name="Klein Lankhorst R."/>
            <person name="Rose M."/>
            <person name="Hauf J."/>
            <person name="Koetter P."/>
            <person name="Berneiser S."/>
            <person name="Hempel S."/>
            <person name="Feldpausch M."/>
            <person name="Lamberth S."/>
            <person name="Van den Daele H."/>
            <person name="De Keyser A."/>
            <person name="Buysshaert C."/>
            <person name="Gielen J."/>
            <person name="Villarroel R."/>
            <person name="De Clercq R."/>
            <person name="van Montagu M."/>
            <person name="Rogers J."/>
            <person name="Cronin A."/>
            <person name="Quail M.A."/>
            <person name="Bray-Allen S."/>
            <person name="Clark L."/>
            <person name="Doggett J."/>
            <person name="Hall S."/>
            <person name="Kay M."/>
            <person name="Lennard N."/>
            <person name="McLay K."/>
            <person name="Mayes R."/>
            <person name="Pettett A."/>
            <person name="Rajandream M.A."/>
            <person name="Lyne M."/>
            <person name="Benes V."/>
            <person name="Rechmann S."/>
            <person name="Borkova D."/>
            <person name="Bloecker H."/>
            <person name="Scharfe M."/>
            <person name="Grimm M."/>
            <person name="Loehnert T.-H."/>
            <person name="Dose S."/>
            <person name="de Haan M."/>
            <person name="Maarse A.C."/>
            <person name="Schaefer M."/>
            <person name="Mueller-Auer S."/>
            <person name="Gabel C."/>
            <person name="Fuchs M."/>
            <person name="Fartmann B."/>
            <person name="Granderath K."/>
            <person name="Dauner D."/>
            <person name="Herzl A."/>
            <person name="Neumann S."/>
            <person name="Argiriou A."/>
            <person name="Vitale D."/>
            <person name="Liguori R."/>
            <person name="Piravandi E."/>
            <person name="Massenet O."/>
            <person name="Quigley F."/>
            <person name="Clabauld G."/>
            <person name="Muendlein A."/>
            <person name="Felber R."/>
            <person name="Schnabl S."/>
            <person name="Hiller R."/>
            <person name="Schmidt W."/>
            <person name="Lecharny A."/>
            <person name="Aubourg S."/>
            <person name="Chefdor F."/>
            <person name="Cooke R."/>
            <person name="Berger C."/>
            <person name="Monfort A."/>
            <person name="Casacuberta E."/>
            <person name="Gibbons T."/>
            <person name="Weber N."/>
            <person name="Vandenbol M."/>
            <person name="Bargues M."/>
            <person name="Terol J."/>
            <person name="Torres A."/>
            <person name="Perez-Perez A."/>
            <person name="Purnelle B."/>
            <person name="Bent E."/>
            <person name="Johnson S."/>
            <person name="Tacon D."/>
            <person name="Jesse T."/>
            <person name="Heijnen L."/>
            <person name="Schwarz S."/>
            <person name="Scholler P."/>
            <person name="Heber S."/>
            <person name="Francs P."/>
            <person name="Bielke C."/>
            <person name="Frishman D."/>
            <person name="Haase D."/>
            <person name="Lemcke K."/>
            <person name="Mewes H.-W."/>
            <person name="Stocker S."/>
            <person name="Zaccaria P."/>
            <person name="Bevan M."/>
            <person name="Wilson R.K."/>
            <person name="de la Bastide M."/>
            <person name="Habermann K."/>
            <person name="Parnell L."/>
            <person name="Dedhia N."/>
            <person name="Gnoj L."/>
            <person name="Schutz K."/>
            <person name="Huang E."/>
            <person name="Spiegel L."/>
            <person name="Sekhon M."/>
            <person name="Murray J."/>
            <person name="Sheet P."/>
            <person name="Cordes M."/>
            <person name="Abu-Threideh J."/>
            <person name="Stoneking T."/>
            <person name="Kalicki J."/>
            <person name="Graves T."/>
            <person name="Harmon G."/>
            <person name="Edwards J."/>
            <person name="Latreille P."/>
            <person name="Courtney L."/>
            <person name="Cloud J."/>
            <person name="Abbott A."/>
            <person name="Scott K."/>
            <person name="Johnson D."/>
            <person name="Minx P."/>
            <person name="Bentley D."/>
            <person name="Fulton B."/>
            <person name="Miller N."/>
            <person name="Greco T."/>
            <person name="Kemp K."/>
            <person name="Kramer J."/>
            <person name="Fulton L."/>
            <person name="Mardis E."/>
            <person name="Dante M."/>
            <person name="Pepin K."/>
            <person name="Hillier L.W."/>
            <person name="Nelson J."/>
            <person name="Spieth J."/>
            <person name="Ryan E."/>
            <person name="Andrews S."/>
            <person name="Geisel C."/>
            <person name="Layman D."/>
            <person name="Du H."/>
            <person name="Ali J."/>
            <person name="Berghoff A."/>
            <person name="Jones K."/>
            <person name="Drone K."/>
            <person name="Cotton M."/>
            <person name="Joshu C."/>
            <person name="Antonoiu B."/>
            <person name="Zidanic M."/>
            <person name="Strong C."/>
            <person name="Sun H."/>
            <person name="Lamar B."/>
            <person name="Yordan C."/>
            <person name="Ma P."/>
            <person name="Zhong J."/>
            <person name="Preston R."/>
            <person name="Vil D."/>
            <person name="Shekher M."/>
            <person name="Matero A."/>
            <person name="Shah R."/>
            <person name="Swaby I.K."/>
            <person name="O'Shaughnessy A."/>
            <person name="Rodriguez M."/>
            <person name="Hoffman J."/>
            <person name="Till S."/>
            <person name="Granat S."/>
            <person name="Shohdy N."/>
            <person name="Hasegawa A."/>
            <person name="Hameed A."/>
            <person name="Lodhi M."/>
            <person name="Johnson A."/>
            <person name="Chen E."/>
            <person name="Marra M.A."/>
            <person name="Martienssen R."/>
            <person name="McCombie W.R."/>
        </authorList>
    </citation>
    <scope>NUCLEOTIDE SEQUENCE [LARGE SCALE GENOMIC DNA]</scope>
    <source>
        <strain>cv. Columbia</strain>
    </source>
</reference>
<reference key="2">
    <citation type="journal article" date="2017" name="Plant J.">
        <title>Araport11: a complete reannotation of the Arabidopsis thaliana reference genome.</title>
        <authorList>
            <person name="Cheng C.Y."/>
            <person name="Krishnakumar V."/>
            <person name="Chan A.P."/>
            <person name="Thibaud-Nissen F."/>
            <person name="Schobel S."/>
            <person name="Town C.D."/>
        </authorList>
    </citation>
    <scope>GENOME REANNOTATION</scope>
    <source>
        <strain>cv. Columbia</strain>
    </source>
</reference>
<reference key="3">
    <citation type="journal article" date="2003" name="Science">
        <title>Empirical analysis of transcriptional activity in the Arabidopsis genome.</title>
        <authorList>
            <person name="Yamada K."/>
            <person name="Lim J."/>
            <person name="Dale J.M."/>
            <person name="Chen H."/>
            <person name="Shinn P."/>
            <person name="Palm C.J."/>
            <person name="Southwick A.M."/>
            <person name="Wu H.C."/>
            <person name="Kim C.J."/>
            <person name="Nguyen M."/>
            <person name="Pham P.K."/>
            <person name="Cheuk R.F."/>
            <person name="Karlin-Newmann G."/>
            <person name="Liu S.X."/>
            <person name="Lam B."/>
            <person name="Sakano H."/>
            <person name="Wu T."/>
            <person name="Yu G."/>
            <person name="Miranda M."/>
            <person name="Quach H.L."/>
            <person name="Tripp M."/>
            <person name="Chang C.H."/>
            <person name="Lee J.M."/>
            <person name="Toriumi M.J."/>
            <person name="Chan M.M."/>
            <person name="Tang C.C."/>
            <person name="Onodera C.S."/>
            <person name="Deng J.M."/>
            <person name="Akiyama K."/>
            <person name="Ansari Y."/>
            <person name="Arakawa T."/>
            <person name="Banh J."/>
            <person name="Banno F."/>
            <person name="Bowser L."/>
            <person name="Brooks S.Y."/>
            <person name="Carninci P."/>
            <person name="Chao Q."/>
            <person name="Choy N."/>
            <person name="Enju A."/>
            <person name="Goldsmith A.D."/>
            <person name="Gurjal M."/>
            <person name="Hansen N.F."/>
            <person name="Hayashizaki Y."/>
            <person name="Johnson-Hopson C."/>
            <person name="Hsuan V.W."/>
            <person name="Iida K."/>
            <person name="Karnes M."/>
            <person name="Khan S."/>
            <person name="Koesema E."/>
            <person name="Ishida J."/>
            <person name="Jiang P.X."/>
            <person name="Jones T."/>
            <person name="Kawai J."/>
            <person name="Kamiya A."/>
            <person name="Meyers C."/>
            <person name="Nakajima M."/>
            <person name="Narusaka M."/>
            <person name="Seki M."/>
            <person name="Sakurai T."/>
            <person name="Satou M."/>
            <person name="Tamse R."/>
            <person name="Vaysberg M."/>
            <person name="Wallender E.K."/>
            <person name="Wong C."/>
            <person name="Yamamura Y."/>
            <person name="Yuan S."/>
            <person name="Shinozaki K."/>
            <person name="Davis R.W."/>
            <person name="Theologis A."/>
            <person name="Ecker J.R."/>
        </authorList>
    </citation>
    <scope>NUCLEOTIDE SEQUENCE [LARGE SCALE MRNA]</scope>
    <source>
        <strain>cv. Columbia</strain>
    </source>
</reference>
<reference key="4">
    <citation type="journal article" date="2009" name="DNA Res.">
        <title>Analysis of multiple occurrences of alternative splicing events in Arabidopsis thaliana using novel sequenced full-length cDNAs.</title>
        <authorList>
            <person name="Iida K."/>
            <person name="Fukami-Kobayashi K."/>
            <person name="Toyoda A."/>
            <person name="Sakaki Y."/>
            <person name="Kobayashi M."/>
            <person name="Seki M."/>
            <person name="Shinozaki K."/>
        </authorList>
    </citation>
    <scope>NUCLEOTIDE SEQUENCE [LARGE SCALE MRNA]</scope>
    <source>
        <strain>cv. Columbia</strain>
    </source>
</reference>
<reference key="5">
    <citation type="journal article" date="2007" name="Plant J.">
        <title>Characterization of the extracellular gamma-glutamyl transpeptidases, GGT1 and GGT2, in Arabidopsis.</title>
        <authorList>
            <person name="Ohkama-Ohtsu N."/>
            <person name="Radwan S."/>
            <person name="Peterson A."/>
            <person name="Zhao P."/>
            <person name="Badr A.F."/>
            <person name="Xiang C."/>
            <person name="Oliver D.J."/>
        </authorList>
    </citation>
    <scope>FUNCTION</scope>
    <scope>SUBCELLULAR LOCATION</scope>
    <scope>TISSUE SPECIFICITY</scope>
    <scope>DISRUPTION PHENOTYPE</scope>
</reference>
<reference key="6">
    <citation type="journal article" date="2007" name="Plant Physiol.">
        <title>Localization of members of the gamma-glutamyl transpeptidase family identifies sites of glutathione and glutathione S-conjugate hydrolysis.</title>
        <authorList>
            <person name="Martin M.N."/>
            <person name="Saladores P.H."/>
            <person name="Lambert E."/>
            <person name="Hudson A.O."/>
            <person name="Leustek T."/>
        </authorList>
    </citation>
    <scope>TISSUE SPECIFICITY</scope>
    <scope>DISRUPTION PHENOTYPE</scope>
</reference>
<reference key="7">
    <citation type="journal article" date="2011" name="J. Exp. Bot.">
        <title>Compensatory expression and substrate inducibility of gamma-glutamyl transferase GGT2 isoform in Arabidopsis thaliana.</title>
        <authorList>
            <person name="Destro T."/>
            <person name="Prasad D."/>
            <person name="Martignago D."/>
            <person name="Bernet I.L."/>
            <person name="Trentin A.R."/>
            <person name="Renu I.K."/>
            <person name="Ferretti M."/>
            <person name="Masi A."/>
        </authorList>
    </citation>
    <scope>TISSUE SPECIFICITY</scope>
    <scope>INDUCTION BY GLUTATHIONE</scope>
</reference>
<comment type="function">
    <text evidence="4">May play a role in preventing oxidative stress by metabolizing extracellular oxidized glutathione (GSSG).</text>
</comment>
<comment type="catalytic activity">
    <reaction>
        <text>an N-terminal (5-L-glutamyl)-[peptide] + an alpha-amino acid = 5-L-glutamyl amino acid + an N-terminal L-alpha-aminoacyl-[peptide]</text>
        <dbReference type="Rhea" id="RHEA:23904"/>
        <dbReference type="Rhea" id="RHEA-COMP:9780"/>
        <dbReference type="Rhea" id="RHEA-COMP:9795"/>
        <dbReference type="ChEBI" id="CHEBI:77644"/>
        <dbReference type="ChEBI" id="CHEBI:78597"/>
        <dbReference type="ChEBI" id="CHEBI:78599"/>
        <dbReference type="ChEBI" id="CHEBI:78608"/>
        <dbReference type="EC" id="2.3.2.2"/>
    </reaction>
</comment>
<comment type="catalytic activity">
    <reaction>
        <text>glutathione + H2O = L-cysteinylglycine + L-glutamate</text>
        <dbReference type="Rhea" id="RHEA:28807"/>
        <dbReference type="ChEBI" id="CHEBI:15377"/>
        <dbReference type="ChEBI" id="CHEBI:29985"/>
        <dbReference type="ChEBI" id="CHEBI:57925"/>
        <dbReference type="ChEBI" id="CHEBI:61694"/>
        <dbReference type="EC" id="3.4.19.13"/>
    </reaction>
</comment>
<comment type="catalytic activity">
    <reaction>
        <text>an S-substituted glutathione + H2O = an S-substituted L-cysteinylglycine + L-glutamate</text>
        <dbReference type="Rhea" id="RHEA:59468"/>
        <dbReference type="ChEBI" id="CHEBI:15377"/>
        <dbReference type="ChEBI" id="CHEBI:29985"/>
        <dbReference type="ChEBI" id="CHEBI:90779"/>
        <dbReference type="ChEBI" id="CHEBI:143103"/>
        <dbReference type="EC" id="3.4.19.13"/>
    </reaction>
</comment>
<comment type="pathway">
    <text>Sulfur metabolism; glutathione metabolism.</text>
</comment>
<comment type="subcellular location">
    <subcellularLocation>
        <location evidence="4">Secreted</location>
        <location evidence="4">Extracellular space</location>
        <location evidence="4">Apoplast</location>
    </subcellularLocation>
    <text>Associated with the plasma membrane and cell wall.</text>
</comment>
<comment type="tissue specificity">
    <text evidence="4 5 6">Expressed in embryo, roots and leaves. In mature plants, expression is restricted to vascular tissues of roots, leaves, flowers and siliques.</text>
</comment>
<comment type="induction">
    <text evidence="6">By glutathione.</text>
</comment>
<comment type="disruption phenotype">
    <text evidence="4 5">Slight reduction in size, early flowering and increased chlorosis in older leaves. Accumulation of GSSG in the apoplastic space.</text>
</comment>
<comment type="similarity">
    <text evidence="7">Belongs to the gamma-glutamyltransferase family.</text>
</comment>
<comment type="sequence caution" evidence="7">
    <conflict type="erroneous gene model prediction">
        <sequence resource="EMBL-CDS" id="CAA18750"/>
    </conflict>
</comment>
<comment type="sequence caution" evidence="7">
    <conflict type="erroneous gene model prediction">
        <sequence resource="EMBL-CDS" id="CAB80627"/>
    </conflict>
</comment>